<feature type="chain" id="PRO_1000062105" description="Flagellar transcriptional regulator FlhD">
    <location>
        <begin position="1"/>
        <end position="116"/>
    </location>
</feature>
<feature type="disulfide bond" description="Interchain" evidence="1">
    <location>
        <position position="65"/>
    </location>
</feature>
<organism>
    <name type="scientific">Yersinia pseudotuberculosis serotype O:1b (strain IP 31758)</name>
    <dbReference type="NCBI Taxonomy" id="349747"/>
    <lineage>
        <taxon>Bacteria</taxon>
        <taxon>Pseudomonadati</taxon>
        <taxon>Pseudomonadota</taxon>
        <taxon>Gammaproteobacteria</taxon>
        <taxon>Enterobacterales</taxon>
        <taxon>Yersiniaceae</taxon>
        <taxon>Yersinia</taxon>
    </lineage>
</organism>
<comment type="function">
    <text evidence="1">Functions in complex with FlhC as a master transcriptional regulator that regulates transcription of several flagellar and non-flagellar operons by binding to their promoter region. Activates expression of class 2 flagellar genes, including fliA, which is a flagellum-specific sigma factor that turns on the class 3 genes. Also regulates genes whose products function in a variety of physiological pathways.</text>
</comment>
<comment type="subunit">
    <text evidence="1">Homodimer; disulfide-linked. Forms a heterohexamer composed of two FlhC and four FlhD subunits. Each FlhC binds a FlhD dimer, forming a heterotrimer, and a hexamer assembles by dimerization of two heterotrimers.</text>
</comment>
<comment type="subcellular location">
    <subcellularLocation>
        <location evidence="1">Cytoplasm</location>
    </subcellularLocation>
</comment>
<comment type="domain">
    <text evidence="1">The C-terminal region contains a putative helix-turn-helix (HTH) motif, suggesting that this region may bind DNA.</text>
</comment>
<comment type="similarity">
    <text evidence="1">Belongs to the FlhD family.</text>
</comment>
<protein>
    <recommendedName>
        <fullName evidence="1">Flagellar transcriptional regulator FlhD</fullName>
    </recommendedName>
</protein>
<sequence>MSTSELLKHIYDINLSYLLLAQRLINDEKASAMFRLGITDTMADALSQLTLPQMVKLAETNQLVCHFRFSDHNTIHHLTKESRVDDLQQIHTGILLSSHLLHELSLKDDSTPKKRA</sequence>
<dbReference type="EMBL" id="CP000720">
    <property type="protein sequence ID" value="ABS47430.1"/>
    <property type="molecule type" value="Genomic_DNA"/>
</dbReference>
<dbReference type="RefSeq" id="WP_011192574.1">
    <property type="nucleotide sequence ID" value="NC_009708.1"/>
</dbReference>
<dbReference type="SMR" id="A7FH83"/>
<dbReference type="GeneID" id="96665894"/>
<dbReference type="KEGG" id="ypi:YpsIP31758_1634"/>
<dbReference type="HOGENOM" id="CLU_144160_0_0_6"/>
<dbReference type="Proteomes" id="UP000002412">
    <property type="component" value="Chromosome"/>
</dbReference>
<dbReference type="GO" id="GO:0005737">
    <property type="term" value="C:cytoplasm"/>
    <property type="evidence" value="ECO:0007669"/>
    <property type="project" value="UniProtKB-SubCell"/>
</dbReference>
<dbReference type="GO" id="GO:0003677">
    <property type="term" value="F:DNA binding"/>
    <property type="evidence" value="ECO:0007669"/>
    <property type="project" value="UniProtKB-UniRule"/>
</dbReference>
<dbReference type="GO" id="GO:0044780">
    <property type="term" value="P:bacterial-type flagellum assembly"/>
    <property type="evidence" value="ECO:0007669"/>
    <property type="project" value="InterPro"/>
</dbReference>
<dbReference type="GO" id="GO:0045893">
    <property type="term" value="P:positive regulation of DNA-templated transcription"/>
    <property type="evidence" value="ECO:0007669"/>
    <property type="project" value="InterPro"/>
</dbReference>
<dbReference type="GO" id="GO:1902208">
    <property type="term" value="P:regulation of bacterial-type flagellum assembly"/>
    <property type="evidence" value="ECO:0007669"/>
    <property type="project" value="UniProtKB-UniRule"/>
</dbReference>
<dbReference type="Gene3D" id="1.10.4000.10">
    <property type="entry name" value="Flagellar transcriptional activator FlhD"/>
    <property type="match status" value="1"/>
</dbReference>
<dbReference type="HAMAP" id="MF_00725">
    <property type="entry name" value="FlhD"/>
    <property type="match status" value="1"/>
</dbReference>
<dbReference type="InterPro" id="IPR023559">
    <property type="entry name" value="Flagellar_FlhD"/>
</dbReference>
<dbReference type="InterPro" id="IPR036194">
    <property type="entry name" value="FlhD_sf"/>
</dbReference>
<dbReference type="NCBIfam" id="NF002783">
    <property type="entry name" value="PRK02909.1-1"/>
    <property type="match status" value="1"/>
</dbReference>
<dbReference type="Pfam" id="PF05247">
    <property type="entry name" value="FlhD"/>
    <property type="match status" value="1"/>
</dbReference>
<dbReference type="SUPFAM" id="SSF63592">
    <property type="entry name" value="Flagellar transcriptional activator FlhD"/>
    <property type="match status" value="1"/>
</dbReference>
<keyword id="KW-0010">Activator</keyword>
<keyword id="KW-1005">Bacterial flagellum biogenesis</keyword>
<keyword id="KW-0963">Cytoplasm</keyword>
<keyword id="KW-1015">Disulfide bond</keyword>
<keyword id="KW-0238">DNA-binding</keyword>
<keyword id="KW-0804">Transcription</keyword>
<keyword id="KW-0805">Transcription regulation</keyword>
<gene>
    <name evidence="1" type="primary">flhD</name>
    <name type="ordered locus">YpsIP31758_1634</name>
</gene>
<reference key="1">
    <citation type="journal article" date="2007" name="PLoS Genet.">
        <title>The complete genome sequence of Yersinia pseudotuberculosis IP31758, the causative agent of Far East scarlet-like fever.</title>
        <authorList>
            <person name="Eppinger M."/>
            <person name="Rosovitz M.J."/>
            <person name="Fricke W.F."/>
            <person name="Rasko D.A."/>
            <person name="Kokorina G."/>
            <person name="Fayolle C."/>
            <person name="Lindler L.E."/>
            <person name="Carniel E."/>
            <person name="Ravel J."/>
        </authorList>
    </citation>
    <scope>NUCLEOTIDE SEQUENCE [LARGE SCALE GENOMIC DNA]</scope>
    <source>
        <strain>IP 31758</strain>
    </source>
</reference>
<evidence type="ECO:0000255" key="1">
    <source>
        <dbReference type="HAMAP-Rule" id="MF_00725"/>
    </source>
</evidence>
<accession>A7FH83</accession>
<proteinExistence type="inferred from homology"/>
<name>FLHD_YERP3</name>